<name>SYDND_BORDL</name>
<keyword id="KW-0030">Aminoacyl-tRNA synthetase</keyword>
<keyword id="KW-0067">ATP-binding</keyword>
<keyword id="KW-0963">Cytoplasm</keyword>
<keyword id="KW-0436">Ligase</keyword>
<keyword id="KW-0547">Nucleotide-binding</keyword>
<keyword id="KW-0648">Protein biosynthesis</keyword>
<feature type="chain" id="PRO_1000090962" description="Aspartate--tRNA(Asp/Asn) ligase">
    <location>
        <begin position="1"/>
        <end position="585"/>
    </location>
</feature>
<feature type="region of interest" description="Aspartate" evidence="1">
    <location>
        <begin position="196"/>
        <end position="199"/>
    </location>
</feature>
<feature type="binding site" evidence="1">
    <location>
        <position position="172"/>
    </location>
    <ligand>
        <name>L-aspartate</name>
        <dbReference type="ChEBI" id="CHEBI:29991"/>
    </ligand>
</feature>
<feature type="binding site" evidence="1">
    <location>
        <begin position="218"/>
        <end position="220"/>
    </location>
    <ligand>
        <name>ATP</name>
        <dbReference type="ChEBI" id="CHEBI:30616"/>
    </ligand>
</feature>
<feature type="binding site" evidence="1">
    <location>
        <position position="218"/>
    </location>
    <ligand>
        <name>L-aspartate</name>
        <dbReference type="ChEBI" id="CHEBI:29991"/>
    </ligand>
</feature>
<feature type="binding site" evidence="1">
    <location>
        <position position="227"/>
    </location>
    <ligand>
        <name>ATP</name>
        <dbReference type="ChEBI" id="CHEBI:30616"/>
    </ligand>
</feature>
<feature type="binding site" evidence="1">
    <location>
        <position position="445"/>
    </location>
    <ligand>
        <name>L-aspartate</name>
        <dbReference type="ChEBI" id="CHEBI:29991"/>
    </ligand>
</feature>
<feature type="binding site" evidence="1">
    <location>
        <position position="479"/>
    </location>
    <ligand>
        <name>ATP</name>
        <dbReference type="ChEBI" id="CHEBI:30616"/>
    </ligand>
</feature>
<feature type="binding site" evidence="1">
    <location>
        <position position="486"/>
    </location>
    <ligand>
        <name>L-aspartate</name>
        <dbReference type="ChEBI" id="CHEBI:29991"/>
    </ligand>
</feature>
<feature type="binding site" evidence="1">
    <location>
        <begin position="531"/>
        <end position="534"/>
    </location>
    <ligand>
        <name>ATP</name>
        <dbReference type="ChEBI" id="CHEBI:30616"/>
    </ligand>
</feature>
<feature type="site" description="Important for tRNA non-discrimination" evidence="1">
    <location>
        <position position="31"/>
    </location>
</feature>
<accession>B5RM04</accession>
<dbReference type="EC" id="6.1.1.23" evidence="1"/>
<dbReference type="EMBL" id="CP000976">
    <property type="protein sequence ID" value="ACH93390.1"/>
    <property type="molecule type" value="Genomic_DNA"/>
</dbReference>
<dbReference type="RefSeq" id="WP_012538201.1">
    <property type="nucleotide sequence ID" value="NC_011229.1"/>
</dbReference>
<dbReference type="SMR" id="B5RM04"/>
<dbReference type="STRING" id="412419.BDU_445"/>
<dbReference type="KEGG" id="bdu:BDU_445"/>
<dbReference type="eggNOG" id="COG0173">
    <property type="taxonomic scope" value="Bacteria"/>
</dbReference>
<dbReference type="HOGENOM" id="CLU_014330_3_2_12"/>
<dbReference type="OrthoDB" id="9802326at2"/>
<dbReference type="Proteomes" id="UP000000611">
    <property type="component" value="Chromosome"/>
</dbReference>
<dbReference type="GO" id="GO:0005737">
    <property type="term" value="C:cytoplasm"/>
    <property type="evidence" value="ECO:0007669"/>
    <property type="project" value="UniProtKB-SubCell"/>
</dbReference>
<dbReference type="GO" id="GO:0004815">
    <property type="term" value="F:aspartate-tRNA ligase activity"/>
    <property type="evidence" value="ECO:0007669"/>
    <property type="project" value="UniProtKB-UniRule"/>
</dbReference>
<dbReference type="GO" id="GO:0050560">
    <property type="term" value="F:aspartate-tRNA(Asn) ligase activity"/>
    <property type="evidence" value="ECO:0007669"/>
    <property type="project" value="UniProtKB-EC"/>
</dbReference>
<dbReference type="GO" id="GO:0005524">
    <property type="term" value="F:ATP binding"/>
    <property type="evidence" value="ECO:0007669"/>
    <property type="project" value="UniProtKB-UniRule"/>
</dbReference>
<dbReference type="GO" id="GO:0003676">
    <property type="term" value="F:nucleic acid binding"/>
    <property type="evidence" value="ECO:0007669"/>
    <property type="project" value="InterPro"/>
</dbReference>
<dbReference type="GO" id="GO:0006422">
    <property type="term" value="P:aspartyl-tRNA aminoacylation"/>
    <property type="evidence" value="ECO:0007669"/>
    <property type="project" value="UniProtKB-UniRule"/>
</dbReference>
<dbReference type="CDD" id="cd00777">
    <property type="entry name" value="AspRS_core"/>
    <property type="match status" value="1"/>
</dbReference>
<dbReference type="CDD" id="cd04317">
    <property type="entry name" value="EcAspRS_like_N"/>
    <property type="match status" value="1"/>
</dbReference>
<dbReference type="Gene3D" id="3.30.930.10">
    <property type="entry name" value="Bira Bifunctional Protein, Domain 2"/>
    <property type="match status" value="1"/>
</dbReference>
<dbReference type="Gene3D" id="3.30.1360.30">
    <property type="entry name" value="GAD-like domain"/>
    <property type="match status" value="1"/>
</dbReference>
<dbReference type="Gene3D" id="2.40.50.140">
    <property type="entry name" value="Nucleic acid-binding proteins"/>
    <property type="match status" value="1"/>
</dbReference>
<dbReference type="HAMAP" id="MF_00044">
    <property type="entry name" value="Asp_tRNA_synth_type1"/>
    <property type="match status" value="1"/>
</dbReference>
<dbReference type="InterPro" id="IPR004364">
    <property type="entry name" value="Aa-tRNA-synt_II"/>
</dbReference>
<dbReference type="InterPro" id="IPR006195">
    <property type="entry name" value="aa-tRNA-synth_II"/>
</dbReference>
<dbReference type="InterPro" id="IPR045864">
    <property type="entry name" value="aa-tRNA-synth_II/BPL/LPL"/>
</dbReference>
<dbReference type="InterPro" id="IPR004524">
    <property type="entry name" value="Asp-tRNA-ligase_1"/>
</dbReference>
<dbReference type="InterPro" id="IPR047089">
    <property type="entry name" value="Asp-tRNA-ligase_1_N"/>
</dbReference>
<dbReference type="InterPro" id="IPR002312">
    <property type="entry name" value="Asp/Asn-tRNA-synth_IIb"/>
</dbReference>
<dbReference type="InterPro" id="IPR047090">
    <property type="entry name" value="AspRS_core"/>
</dbReference>
<dbReference type="InterPro" id="IPR004115">
    <property type="entry name" value="GAD-like_sf"/>
</dbReference>
<dbReference type="InterPro" id="IPR029351">
    <property type="entry name" value="GAD_dom"/>
</dbReference>
<dbReference type="InterPro" id="IPR012340">
    <property type="entry name" value="NA-bd_OB-fold"/>
</dbReference>
<dbReference type="InterPro" id="IPR004365">
    <property type="entry name" value="NA-bd_OB_tRNA"/>
</dbReference>
<dbReference type="NCBIfam" id="TIGR00459">
    <property type="entry name" value="aspS_bact"/>
    <property type="match status" value="1"/>
</dbReference>
<dbReference type="NCBIfam" id="NF001750">
    <property type="entry name" value="PRK00476.1"/>
    <property type="match status" value="1"/>
</dbReference>
<dbReference type="PANTHER" id="PTHR22594:SF5">
    <property type="entry name" value="ASPARTATE--TRNA LIGASE, MITOCHONDRIAL"/>
    <property type="match status" value="1"/>
</dbReference>
<dbReference type="PANTHER" id="PTHR22594">
    <property type="entry name" value="ASPARTYL/LYSYL-TRNA SYNTHETASE"/>
    <property type="match status" value="1"/>
</dbReference>
<dbReference type="Pfam" id="PF02938">
    <property type="entry name" value="GAD"/>
    <property type="match status" value="1"/>
</dbReference>
<dbReference type="Pfam" id="PF00152">
    <property type="entry name" value="tRNA-synt_2"/>
    <property type="match status" value="1"/>
</dbReference>
<dbReference type="Pfam" id="PF01336">
    <property type="entry name" value="tRNA_anti-codon"/>
    <property type="match status" value="1"/>
</dbReference>
<dbReference type="PRINTS" id="PR01042">
    <property type="entry name" value="TRNASYNTHASP"/>
</dbReference>
<dbReference type="SUPFAM" id="SSF55681">
    <property type="entry name" value="Class II aaRS and biotin synthetases"/>
    <property type="match status" value="1"/>
</dbReference>
<dbReference type="SUPFAM" id="SSF55261">
    <property type="entry name" value="GAD domain-like"/>
    <property type="match status" value="1"/>
</dbReference>
<dbReference type="SUPFAM" id="SSF50249">
    <property type="entry name" value="Nucleic acid-binding proteins"/>
    <property type="match status" value="1"/>
</dbReference>
<dbReference type="PROSITE" id="PS50862">
    <property type="entry name" value="AA_TRNA_LIGASE_II"/>
    <property type="match status" value="1"/>
</dbReference>
<organism>
    <name type="scientific">Borrelia duttonii (strain Ly)</name>
    <dbReference type="NCBI Taxonomy" id="412419"/>
    <lineage>
        <taxon>Bacteria</taxon>
        <taxon>Pseudomonadati</taxon>
        <taxon>Spirochaetota</taxon>
        <taxon>Spirochaetia</taxon>
        <taxon>Spirochaetales</taxon>
        <taxon>Borreliaceae</taxon>
        <taxon>Borrelia</taxon>
    </lineage>
</organism>
<reference key="1">
    <citation type="journal article" date="2008" name="PLoS Genet.">
        <title>The genome of Borrelia recurrentis, the agent of deadly louse-borne relapsing fever, is a degraded subset of tick-borne Borrelia duttonii.</title>
        <authorList>
            <person name="Lescot M."/>
            <person name="Audic S."/>
            <person name="Robert C."/>
            <person name="Nguyen T.T."/>
            <person name="Blanc G."/>
            <person name="Cutler S.J."/>
            <person name="Wincker P."/>
            <person name="Couloux A."/>
            <person name="Claverie J.-M."/>
            <person name="Raoult D."/>
            <person name="Drancourt M."/>
        </authorList>
    </citation>
    <scope>NUCLEOTIDE SEQUENCE [LARGE SCALE GENOMIC DNA]</scope>
    <source>
        <strain>Ly</strain>
    </source>
</reference>
<protein>
    <recommendedName>
        <fullName evidence="1">Aspartate--tRNA(Asp/Asn) ligase</fullName>
        <ecNumber evidence="1">6.1.1.23</ecNumber>
    </recommendedName>
    <alternativeName>
        <fullName evidence="1">Aspartyl-tRNA synthetase</fullName>
        <shortName evidence="1">AspRS</shortName>
    </alternativeName>
    <alternativeName>
        <fullName evidence="1">Non-discriminating aspartyl-tRNA synthetase</fullName>
        <shortName evidence="1">ND-AspRS</shortName>
    </alternativeName>
</protein>
<evidence type="ECO:0000255" key="1">
    <source>
        <dbReference type="HAMAP-Rule" id="MF_00044"/>
    </source>
</evidence>
<gene>
    <name evidence="1" type="primary">aspS</name>
    <name type="ordered locus">BDU_445</name>
</gene>
<proteinExistence type="inferred from homology"/>
<comment type="function">
    <text evidence="1">Aspartyl-tRNA synthetase with relaxed tRNA specificity since it is able to aspartylate not only its cognate tRNA(Asp) but also tRNA(Asn). Reaction proceeds in two steps: L-aspartate is first activated by ATP to form Asp-AMP and then transferred to the acceptor end of tRNA(Asp/Asn).</text>
</comment>
<comment type="catalytic activity">
    <reaction evidence="1">
        <text>tRNA(Asx) + L-aspartate + ATP = L-aspartyl-tRNA(Asx) + AMP + diphosphate</text>
        <dbReference type="Rhea" id="RHEA:18349"/>
        <dbReference type="Rhea" id="RHEA-COMP:9710"/>
        <dbReference type="Rhea" id="RHEA-COMP:9711"/>
        <dbReference type="ChEBI" id="CHEBI:29991"/>
        <dbReference type="ChEBI" id="CHEBI:30616"/>
        <dbReference type="ChEBI" id="CHEBI:33019"/>
        <dbReference type="ChEBI" id="CHEBI:78442"/>
        <dbReference type="ChEBI" id="CHEBI:78516"/>
        <dbReference type="ChEBI" id="CHEBI:456215"/>
        <dbReference type="EC" id="6.1.1.23"/>
    </reaction>
</comment>
<comment type="subunit">
    <text evidence="1">Homodimer.</text>
</comment>
<comment type="subcellular location">
    <subcellularLocation>
        <location evidence="1">Cytoplasm</location>
    </subcellularLocation>
</comment>
<comment type="similarity">
    <text evidence="1">Belongs to the class-II aminoacyl-tRNA synthetase family. Type 1 subfamily.</text>
</comment>
<sequence length="585" mass="68003">MFKIIKCNQINNKLINKKIEINGWVKKIRNHGKVTFINIRDRYDEAQILVSDEKLLKITSQIKMEYCIKIQGKLNLRPLELVNREMKTGELEIIAENIDIISKCNELPFMIENNNNASDNSKLEYRYLDLRREEQKQKIILRSKVIHIIRNHLTKQDFLELETPTFVKSTPEGARDFLVPSRIHKGHFYALPQSPQIYKQLAMIAGLDKYFQIARCYRDEDSRGDRQPEFTQLDLEMSFIKKENIFKLIENLIFTIFKNSLNITLPKKFKKITYKDAMNIYGSDKPDTRYELLIQDMSKALKQSPFDVFKDTLQNKGTIKALIIKNQAHNFSRSKINSLEEHAKLYKARTLYFTKIENNEFTGGIAKFINPIKKTLIETYSLKNNDLIFFIADLWETACKAIGQIRIKIATELNLINKNIFEFLWIYDFPLFEYDEDTQSYKAAHHMFSMPQAKYINTLESNPSEVLGEVYDLVLNGTELGSGSIRVHTKELQQRIFNIVGFNDKIAEERFGFFLKALEYGAPIHGGIAIGIDRLLMLMTNSNSIKDVILFPKNSFAASPLDKSPSKISNEQLKELNLTIENNKN</sequence>